<dbReference type="EMBL" id="AF241280">
    <property type="protein sequence ID" value="AAF82452.1"/>
    <property type="molecule type" value="Genomic_DNA"/>
</dbReference>
<dbReference type="SMR" id="Q9MS66"/>
<dbReference type="GO" id="GO:0009535">
    <property type="term" value="C:chloroplast thylakoid membrane"/>
    <property type="evidence" value="ECO:0007669"/>
    <property type="project" value="UniProtKB-SubCell"/>
</dbReference>
<dbReference type="GO" id="GO:0009523">
    <property type="term" value="C:photosystem II"/>
    <property type="evidence" value="ECO:0007669"/>
    <property type="project" value="UniProtKB-KW"/>
</dbReference>
<dbReference type="GO" id="GO:0015979">
    <property type="term" value="P:photosynthesis"/>
    <property type="evidence" value="ECO:0007669"/>
    <property type="project" value="UniProtKB-KW"/>
</dbReference>
<dbReference type="HAMAP" id="MF_01329">
    <property type="entry name" value="PSII_Psb30_Ycf12"/>
    <property type="match status" value="1"/>
</dbReference>
<dbReference type="InterPro" id="IPR010284">
    <property type="entry name" value="PSII_Ycf12_core-subunit"/>
</dbReference>
<dbReference type="NCBIfam" id="NF010239">
    <property type="entry name" value="PRK13686.1"/>
    <property type="match status" value="1"/>
</dbReference>
<dbReference type="Pfam" id="PF05969">
    <property type="entry name" value="PSII_Ycf12"/>
    <property type="match status" value="1"/>
</dbReference>
<organism>
    <name type="scientific">Euglena mutabilis</name>
    <dbReference type="NCBI Taxonomy" id="38275"/>
    <lineage>
        <taxon>Eukaryota</taxon>
        <taxon>Discoba</taxon>
        <taxon>Euglenozoa</taxon>
        <taxon>Euglenida</taxon>
        <taxon>Spirocuta</taxon>
        <taxon>Euglenophyceae</taxon>
        <taxon>Euglenales</taxon>
        <taxon>Euglenaceae</taxon>
        <taxon>Euglena</taxon>
    </lineage>
</organism>
<evidence type="ECO:0000255" key="1">
    <source>
        <dbReference type="HAMAP-Rule" id="MF_01329"/>
    </source>
</evidence>
<evidence type="ECO:0000305" key="2"/>
<comment type="function">
    <text evidence="1">A core subunit of photosystem II (PSII), probably helps stabilize the reaction center.</text>
</comment>
<comment type="subunit">
    <text evidence="2">PSII is composed of 1 copy each of membrane proteins PsbA, PsbB, PsbC, PsbD, PsbE, PsbF, PsbH, PsbI, PsbJ, PsbK, PsbL, PsbM, PsbT, PsbY, PsbZ, Psb30/Ycf12, peripheral proteins of the oxygen-evolving complex and a large number of cofactors. It forms dimeric complexes.</text>
</comment>
<comment type="subcellular location">
    <subcellularLocation>
        <location evidence="1">Plastid</location>
        <location evidence="1">Chloroplast thylakoid membrane</location>
        <topology evidence="1">Single-pass membrane protein</topology>
    </subcellularLocation>
</comment>
<comment type="similarity">
    <text evidence="1">Belongs to the Psb30/Ycf12 family.</text>
</comment>
<keyword id="KW-0150">Chloroplast</keyword>
<keyword id="KW-0472">Membrane</keyword>
<keyword id="KW-0602">Photosynthesis</keyword>
<keyword id="KW-0604">Photosystem II</keyword>
<keyword id="KW-0934">Plastid</keyword>
<keyword id="KW-0793">Thylakoid</keyword>
<keyword id="KW-0812">Transmembrane</keyword>
<keyword id="KW-1133">Transmembrane helix</keyword>
<feature type="chain" id="PRO_0000059022" description="Photosystem II reaction center protein Psb30">
    <location>
        <begin position="1"/>
        <end position="33"/>
    </location>
</feature>
<feature type="transmembrane region" description="Helical" evidence="1">
    <location>
        <begin position="5"/>
        <end position="25"/>
    </location>
</feature>
<protein>
    <recommendedName>
        <fullName evidence="1">Photosystem II reaction center protein Psb30</fullName>
    </recommendedName>
    <alternativeName>
        <fullName evidence="1">Photosystem II reaction center protein Ycf12</fullName>
    </alternativeName>
</protein>
<sequence length="33" mass="3548">MNIELIVQLGSLTLITIAGPLIVALLFLRQGNL</sequence>
<gene>
    <name evidence="1" type="primary">psb30</name>
    <name evidence="1" type="synonym">ycf12</name>
</gene>
<name>PSB30_EUGMU</name>
<reference key="1">
    <citation type="journal article" date="2001" name="Mol. Gen. Genet.">
        <title>Comparison of psbK operon organization and group III intron content in chloroplast genomes of 12 Euglenoid species.</title>
        <authorList>
            <person name="Doetsch N.A."/>
            <person name="Thompson M.D."/>
            <person name="Favreau M.R."/>
            <person name="Hallick R.B."/>
        </authorList>
    </citation>
    <scope>NUCLEOTIDE SEQUENCE [GENOMIC DNA]</scope>
</reference>
<accession>Q9MS66</accession>
<geneLocation type="chloroplast"/>
<proteinExistence type="inferred from homology"/>